<accession>Q30ZZ6</accession>
<gene>
    <name evidence="1" type="primary">efp</name>
    <name type="ordered locus">Dde_1953</name>
</gene>
<evidence type="ECO:0000255" key="1">
    <source>
        <dbReference type="HAMAP-Rule" id="MF_00141"/>
    </source>
</evidence>
<proteinExistence type="inferred from homology"/>
<keyword id="KW-0963">Cytoplasm</keyword>
<keyword id="KW-0251">Elongation factor</keyword>
<keyword id="KW-0648">Protein biosynthesis</keyword>
<keyword id="KW-1185">Reference proteome</keyword>
<organism>
    <name type="scientific">Oleidesulfovibrio alaskensis (strain ATCC BAA-1058 / DSM 17464 / G20)</name>
    <name type="common">Desulfovibrio alaskensis</name>
    <dbReference type="NCBI Taxonomy" id="207559"/>
    <lineage>
        <taxon>Bacteria</taxon>
        <taxon>Pseudomonadati</taxon>
        <taxon>Thermodesulfobacteriota</taxon>
        <taxon>Desulfovibrionia</taxon>
        <taxon>Desulfovibrionales</taxon>
        <taxon>Desulfovibrionaceae</taxon>
        <taxon>Oleidesulfovibrio</taxon>
    </lineage>
</organism>
<dbReference type="EMBL" id="CP000112">
    <property type="protein sequence ID" value="ABB38750.1"/>
    <property type="molecule type" value="Genomic_DNA"/>
</dbReference>
<dbReference type="RefSeq" id="WP_011367867.1">
    <property type="nucleotide sequence ID" value="NC_007519.1"/>
</dbReference>
<dbReference type="SMR" id="Q30ZZ6"/>
<dbReference type="STRING" id="207559.Dde_1953"/>
<dbReference type="KEGG" id="dde:Dde_1953"/>
<dbReference type="eggNOG" id="COG0231">
    <property type="taxonomic scope" value="Bacteria"/>
</dbReference>
<dbReference type="HOGENOM" id="CLU_074944_0_1_7"/>
<dbReference type="UniPathway" id="UPA00345"/>
<dbReference type="Proteomes" id="UP000002710">
    <property type="component" value="Chromosome"/>
</dbReference>
<dbReference type="GO" id="GO:0005737">
    <property type="term" value="C:cytoplasm"/>
    <property type="evidence" value="ECO:0007669"/>
    <property type="project" value="UniProtKB-SubCell"/>
</dbReference>
<dbReference type="GO" id="GO:0003746">
    <property type="term" value="F:translation elongation factor activity"/>
    <property type="evidence" value="ECO:0007669"/>
    <property type="project" value="UniProtKB-UniRule"/>
</dbReference>
<dbReference type="GO" id="GO:0043043">
    <property type="term" value="P:peptide biosynthetic process"/>
    <property type="evidence" value="ECO:0007669"/>
    <property type="project" value="InterPro"/>
</dbReference>
<dbReference type="CDD" id="cd04470">
    <property type="entry name" value="S1_EF-P_repeat_1"/>
    <property type="match status" value="1"/>
</dbReference>
<dbReference type="CDD" id="cd05794">
    <property type="entry name" value="S1_EF-P_repeat_2"/>
    <property type="match status" value="1"/>
</dbReference>
<dbReference type="FunFam" id="2.30.30.30:FF:000003">
    <property type="entry name" value="Elongation factor P"/>
    <property type="match status" value="1"/>
</dbReference>
<dbReference type="FunFam" id="2.40.50.140:FF:000004">
    <property type="entry name" value="Elongation factor P"/>
    <property type="match status" value="1"/>
</dbReference>
<dbReference type="FunFam" id="2.40.50.140:FF:000009">
    <property type="entry name" value="Elongation factor P"/>
    <property type="match status" value="1"/>
</dbReference>
<dbReference type="Gene3D" id="2.30.30.30">
    <property type="match status" value="1"/>
</dbReference>
<dbReference type="Gene3D" id="2.40.50.140">
    <property type="entry name" value="Nucleic acid-binding proteins"/>
    <property type="match status" value="2"/>
</dbReference>
<dbReference type="HAMAP" id="MF_00141">
    <property type="entry name" value="EF_P"/>
    <property type="match status" value="1"/>
</dbReference>
<dbReference type="InterPro" id="IPR015365">
    <property type="entry name" value="Elong-fact-P_C"/>
</dbReference>
<dbReference type="InterPro" id="IPR012340">
    <property type="entry name" value="NA-bd_OB-fold"/>
</dbReference>
<dbReference type="InterPro" id="IPR014722">
    <property type="entry name" value="Rib_uL2_dom2"/>
</dbReference>
<dbReference type="InterPro" id="IPR020599">
    <property type="entry name" value="Transl_elong_fac_P/YeiP"/>
</dbReference>
<dbReference type="InterPro" id="IPR013185">
    <property type="entry name" value="Transl_elong_KOW-like"/>
</dbReference>
<dbReference type="InterPro" id="IPR001059">
    <property type="entry name" value="Transl_elong_P/YeiP_cen"/>
</dbReference>
<dbReference type="InterPro" id="IPR013852">
    <property type="entry name" value="Transl_elong_P/YeiP_CS"/>
</dbReference>
<dbReference type="InterPro" id="IPR011768">
    <property type="entry name" value="Transl_elongation_fac_P"/>
</dbReference>
<dbReference type="InterPro" id="IPR008991">
    <property type="entry name" value="Translation_prot_SH3-like_sf"/>
</dbReference>
<dbReference type="NCBIfam" id="TIGR00038">
    <property type="entry name" value="efp"/>
    <property type="match status" value="1"/>
</dbReference>
<dbReference type="NCBIfam" id="NF001810">
    <property type="entry name" value="PRK00529.1"/>
    <property type="match status" value="1"/>
</dbReference>
<dbReference type="PANTHER" id="PTHR30053">
    <property type="entry name" value="ELONGATION FACTOR P"/>
    <property type="match status" value="1"/>
</dbReference>
<dbReference type="PANTHER" id="PTHR30053:SF14">
    <property type="entry name" value="TRANSLATION ELONGATION FACTOR KOW-LIKE DOMAIN-CONTAINING PROTEIN"/>
    <property type="match status" value="1"/>
</dbReference>
<dbReference type="Pfam" id="PF01132">
    <property type="entry name" value="EFP"/>
    <property type="match status" value="1"/>
</dbReference>
<dbReference type="Pfam" id="PF08207">
    <property type="entry name" value="EFP_N"/>
    <property type="match status" value="1"/>
</dbReference>
<dbReference type="Pfam" id="PF09285">
    <property type="entry name" value="Elong-fact-P_C"/>
    <property type="match status" value="1"/>
</dbReference>
<dbReference type="PIRSF" id="PIRSF005901">
    <property type="entry name" value="EF-P"/>
    <property type="match status" value="1"/>
</dbReference>
<dbReference type="SMART" id="SM01185">
    <property type="entry name" value="EFP"/>
    <property type="match status" value="1"/>
</dbReference>
<dbReference type="SMART" id="SM00841">
    <property type="entry name" value="Elong-fact-P_C"/>
    <property type="match status" value="1"/>
</dbReference>
<dbReference type="SUPFAM" id="SSF50249">
    <property type="entry name" value="Nucleic acid-binding proteins"/>
    <property type="match status" value="2"/>
</dbReference>
<dbReference type="SUPFAM" id="SSF50104">
    <property type="entry name" value="Translation proteins SH3-like domain"/>
    <property type="match status" value="1"/>
</dbReference>
<dbReference type="PROSITE" id="PS01275">
    <property type="entry name" value="EFP"/>
    <property type="match status" value="1"/>
</dbReference>
<comment type="function">
    <text evidence="1">Involved in peptide bond synthesis. Stimulates efficient translation and peptide-bond synthesis on native or reconstituted 70S ribosomes in vitro. Probably functions indirectly by altering the affinity of the ribosome for aminoacyl-tRNA, thus increasing their reactivity as acceptors for peptidyl transferase.</text>
</comment>
<comment type="pathway">
    <text evidence="1">Protein biosynthesis; polypeptide chain elongation.</text>
</comment>
<comment type="subcellular location">
    <subcellularLocation>
        <location evidence="1">Cytoplasm</location>
    </subcellularLocation>
</comment>
<comment type="similarity">
    <text evidence="1">Belongs to the elongation factor P family.</text>
</comment>
<sequence length="185" mass="20891">MYSTTDFRRGLRIEIDGTPFEIVDFQHFKPGKGGAIVRTKMRNLLTGRIMDNNFRSGEKVGRPDMENRDMQFLYREDANLVFMDMTTYEQIYMPEETTEGKAGFLKEGQTIRVLLFNGTPLAIELPAALVLEVTETEPGAKGDTVSNVTKPATLETGIVIQVPIFVNQGDKVKVNTDTREYMGRE</sequence>
<protein>
    <recommendedName>
        <fullName evidence="1">Elongation factor P</fullName>
        <shortName evidence="1">EF-P</shortName>
    </recommendedName>
</protein>
<feature type="chain" id="PRO_1000010730" description="Elongation factor P">
    <location>
        <begin position="1"/>
        <end position="185"/>
    </location>
</feature>
<name>EFP_OLEA2</name>
<reference key="1">
    <citation type="journal article" date="2011" name="J. Bacteriol.">
        <title>Complete genome sequence and updated annotation of Desulfovibrio alaskensis G20.</title>
        <authorList>
            <person name="Hauser L.J."/>
            <person name="Land M.L."/>
            <person name="Brown S.D."/>
            <person name="Larimer F."/>
            <person name="Keller K.L."/>
            <person name="Rapp-Giles B.J."/>
            <person name="Price M.N."/>
            <person name="Lin M."/>
            <person name="Bruce D.C."/>
            <person name="Detter J.C."/>
            <person name="Tapia R."/>
            <person name="Han C.S."/>
            <person name="Goodwin L.A."/>
            <person name="Cheng J.F."/>
            <person name="Pitluck S."/>
            <person name="Copeland A."/>
            <person name="Lucas S."/>
            <person name="Nolan M."/>
            <person name="Lapidus A.L."/>
            <person name="Palumbo A.V."/>
            <person name="Wall J.D."/>
        </authorList>
    </citation>
    <scope>NUCLEOTIDE SEQUENCE [LARGE SCALE GENOMIC DNA]</scope>
    <source>
        <strain>ATCC BAA-1058 / DSM 17464 / G20</strain>
    </source>
</reference>